<accession>B9DNH6</accession>
<evidence type="ECO:0000255" key="1">
    <source>
        <dbReference type="HAMAP-Rule" id="MF_00144"/>
    </source>
</evidence>
<protein>
    <recommendedName>
        <fullName evidence="1">tRNA-specific 2-thiouridylase MnmA</fullName>
        <ecNumber evidence="1">2.8.1.13</ecNumber>
    </recommendedName>
</protein>
<keyword id="KW-0067">ATP-binding</keyword>
<keyword id="KW-0963">Cytoplasm</keyword>
<keyword id="KW-1015">Disulfide bond</keyword>
<keyword id="KW-0547">Nucleotide-binding</keyword>
<keyword id="KW-1185">Reference proteome</keyword>
<keyword id="KW-0694">RNA-binding</keyword>
<keyword id="KW-0808">Transferase</keyword>
<keyword id="KW-0819">tRNA processing</keyword>
<keyword id="KW-0820">tRNA-binding</keyword>
<reference key="1">
    <citation type="journal article" date="2009" name="Appl. Environ. Microbiol.">
        <title>Genome analysis of the meat starter culture bacterium Staphylococcus carnosus TM300.</title>
        <authorList>
            <person name="Rosenstein R."/>
            <person name="Nerz C."/>
            <person name="Biswas L."/>
            <person name="Resch A."/>
            <person name="Raddatz G."/>
            <person name="Schuster S.C."/>
            <person name="Goetz F."/>
        </authorList>
    </citation>
    <scope>NUCLEOTIDE SEQUENCE [LARGE SCALE GENOMIC DNA]</scope>
    <source>
        <strain>TM300</strain>
    </source>
</reference>
<feature type="chain" id="PRO_1000198627" description="tRNA-specific 2-thiouridylase MnmA">
    <location>
        <begin position="1"/>
        <end position="370"/>
    </location>
</feature>
<feature type="region of interest" description="Interaction with target base in tRNA" evidence="1">
    <location>
        <begin position="97"/>
        <end position="99"/>
    </location>
</feature>
<feature type="region of interest" description="Interaction with tRNA" evidence="1">
    <location>
        <begin position="149"/>
        <end position="151"/>
    </location>
</feature>
<feature type="region of interest" description="Interaction with tRNA" evidence="1">
    <location>
        <begin position="307"/>
        <end position="308"/>
    </location>
</feature>
<feature type="active site" description="Nucleophile" evidence="1">
    <location>
        <position position="102"/>
    </location>
</feature>
<feature type="active site" description="Cysteine persulfide intermediate" evidence="1">
    <location>
        <position position="199"/>
    </location>
</feature>
<feature type="binding site" evidence="1">
    <location>
        <begin position="11"/>
        <end position="18"/>
    </location>
    <ligand>
        <name>ATP</name>
        <dbReference type="ChEBI" id="CHEBI:30616"/>
    </ligand>
</feature>
<feature type="binding site" evidence="1">
    <location>
        <position position="37"/>
    </location>
    <ligand>
        <name>ATP</name>
        <dbReference type="ChEBI" id="CHEBI:30616"/>
    </ligand>
</feature>
<feature type="binding site" evidence="1">
    <location>
        <position position="126"/>
    </location>
    <ligand>
        <name>ATP</name>
        <dbReference type="ChEBI" id="CHEBI:30616"/>
    </ligand>
</feature>
<feature type="site" description="Interaction with tRNA" evidence="1">
    <location>
        <position position="127"/>
    </location>
</feature>
<feature type="site" description="Interaction with tRNA" evidence="1">
    <location>
        <position position="340"/>
    </location>
</feature>
<feature type="disulfide bond" description="Alternate" evidence="1">
    <location>
        <begin position="102"/>
        <end position="199"/>
    </location>
</feature>
<gene>
    <name evidence="1" type="primary">mnmA</name>
    <name type="ordered locus">Sca_1233</name>
</gene>
<dbReference type="EC" id="2.8.1.13" evidence="1"/>
<dbReference type="EMBL" id="AM295250">
    <property type="protein sequence ID" value="CAL28140.1"/>
    <property type="molecule type" value="Genomic_DNA"/>
</dbReference>
<dbReference type="RefSeq" id="WP_015900480.1">
    <property type="nucleotide sequence ID" value="NC_012121.1"/>
</dbReference>
<dbReference type="SMR" id="B9DNH6"/>
<dbReference type="GeneID" id="93793658"/>
<dbReference type="KEGG" id="sca:SCA_1233"/>
<dbReference type="eggNOG" id="COG0482">
    <property type="taxonomic scope" value="Bacteria"/>
</dbReference>
<dbReference type="HOGENOM" id="CLU_035188_1_0_9"/>
<dbReference type="OrthoDB" id="9800696at2"/>
<dbReference type="BioCyc" id="SCAR396513:SCA_RS06170-MONOMER"/>
<dbReference type="Proteomes" id="UP000000444">
    <property type="component" value="Chromosome"/>
</dbReference>
<dbReference type="GO" id="GO:0005737">
    <property type="term" value="C:cytoplasm"/>
    <property type="evidence" value="ECO:0007669"/>
    <property type="project" value="UniProtKB-SubCell"/>
</dbReference>
<dbReference type="GO" id="GO:0005524">
    <property type="term" value="F:ATP binding"/>
    <property type="evidence" value="ECO:0007669"/>
    <property type="project" value="UniProtKB-KW"/>
</dbReference>
<dbReference type="GO" id="GO:0000049">
    <property type="term" value="F:tRNA binding"/>
    <property type="evidence" value="ECO:0007669"/>
    <property type="project" value="UniProtKB-KW"/>
</dbReference>
<dbReference type="GO" id="GO:0103016">
    <property type="term" value="F:tRNA-uridine 2-sulfurtransferase activity"/>
    <property type="evidence" value="ECO:0007669"/>
    <property type="project" value="UniProtKB-EC"/>
</dbReference>
<dbReference type="GO" id="GO:0002143">
    <property type="term" value="P:tRNA wobble position uridine thiolation"/>
    <property type="evidence" value="ECO:0007669"/>
    <property type="project" value="TreeGrafter"/>
</dbReference>
<dbReference type="CDD" id="cd01998">
    <property type="entry name" value="MnmA_TRMU-like"/>
    <property type="match status" value="1"/>
</dbReference>
<dbReference type="FunFam" id="2.30.30.280:FF:000001">
    <property type="entry name" value="tRNA-specific 2-thiouridylase MnmA"/>
    <property type="match status" value="1"/>
</dbReference>
<dbReference type="FunFam" id="2.40.30.10:FF:000023">
    <property type="entry name" value="tRNA-specific 2-thiouridylase MnmA"/>
    <property type="match status" value="1"/>
</dbReference>
<dbReference type="FunFam" id="3.40.50.620:FF:000004">
    <property type="entry name" value="tRNA-specific 2-thiouridylase MnmA"/>
    <property type="match status" value="1"/>
</dbReference>
<dbReference type="Gene3D" id="2.30.30.280">
    <property type="entry name" value="Adenine nucleotide alpha hydrolases-like domains"/>
    <property type="match status" value="1"/>
</dbReference>
<dbReference type="Gene3D" id="3.40.50.620">
    <property type="entry name" value="HUPs"/>
    <property type="match status" value="1"/>
</dbReference>
<dbReference type="Gene3D" id="2.40.30.10">
    <property type="entry name" value="Translation factors"/>
    <property type="match status" value="1"/>
</dbReference>
<dbReference type="HAMAP" id="MF_00144">
    <property type="entry name" value="tRNA_thiouridyl_MnmA"/>
    <property type="match status" value="1"/>
</dbReference>
<dbReference type="InterPro" id="IPR004506">
    <property type="entry name" value="MnmA-like"/>
</dbReference>
<dbReference type="InterPro" id="IPR046885">
    <property type="entry name" value="MnmA-like_C"/>
</dbReference>
<dbReference type="InterPro" id="IPR046884">
    <property type="entry name" value="MnmA-like_central"/>
</dbReference>
<dbReference type="InterPro" id="IPR023382">
    <property type="entry name" value="MnmA-like_central_sf"/>
</dbReference>
<dbReference type="InterPro" id="IPR014729">
    <property type="entry name" value="Rossmann-like_a/b/a_fold"/>
</dbReference>
<dbReference type="NCBIfam" id="NF001138">
    <property type="entry name" value="PRK00143.1"/>
    <property type="match status" value="1"/>
</dbReference>
<dbReference type="NCBIfam" id="TIGR00420">
    <property type="entry name" value="trmU"/>
    <property type="match status" value="1"/>
</dbReference>
<dbReference type="PANTHER" id="PTHR11933:SF5">
    <property type="entry name" value="MITOCHONDRIAL TRNA-SPECIFIC 2-THIOURIDYLASE 1"/>
    <property type="match status" value="1"/>
</dbReference>
<dbReference type="PANTHER" id="PTHR11933">
    <property type="entry name" value="TRNA 5-METHYLAMINOMETHYL-2-THIOURIDYLATE -METHYLTRANSFERASE"/>
    <property type="match status" value="1"/>
</dbReference>
<dbReference type="Pfam" id="PF03054">
    <property type="entry name" value="tRNA_Me_trans"/>
    <property type="match status" value="1"/>
</dbReference>
<dbReference type="Pfam" id="PF20258">
    <property type="entry name" value="tRNA_Me_trans_C"/>
    <property type="match status" value="1"/>
</dbReference>
<dbReference type="Pfam" id="PF20259">
    <property type="entry name" value="tRNA_Me_trans_M"/>
    <property type="match status" value="1"/>
</dbReference>
<dbReference type="SUPFAM" id="SSF52402">
    <property type="entry name" value="Adenine nucleotide alpha hydrolases-like"/>
    <property type="match status" value="1"/>
</dbReference>
<organism>
    <name type="scientific">Staphylococcus carnosus (strain TM300)</name>
    <dbReference type="NCBI Taxonomy" id="396513"/>
    <lineage>
        <taxon>Bacteria</taxon>
        <taxon>Bacillati</taxon>
        <taxon>Bacillota</taxon>
        <taxon>Bacilli</taxon>
        <taxon>Bacillales</taxon>
        <taxon>Staphylococcaceae</taxon>
        <taxon>Staphylococcus</taxon>
    </lineage>
</organism>
<sequence length="370" mass="41570">MSNQDTRVVVGMSGGVDSSVTAYLLKEQGYDVIGIFMKNWDDTDENGVCTATEDYNDVIAVCNQIGIPYYAVNFEQEYWDKVFTYFLDEYKKGRTPNPDVMCNKEIKFKAFLDHAMKLGADYVATGHYAQVRRDADGNVEMLRGVDNNKDQTYFLNQLTHEQLSKVMFPLGGMEKSEVRRIAAEQDLATAKKKDSTGICFIGERNFKEFLSNYLPAQSGDMRTLNGKKMGTHSGLMYYTIGQRHGLGIGGDGDPWFVVGKNLEDNVLYVEQGFHHDALYSDYLIASDVSLVNDIDLTDGLECTAKFRYRQKDTKVTVTRIDENQIRVDFDQPVRAITPGQAVVLYDGDVCLGGATIDDVYKEAGQLTYIV</sequence>
<name>MNMA_STACT</name>
<proteinExistence type="inferred from homology"/>
<comment type="function">
    <text evidence="1">Catalyzes the 2-thiolation of uridine at the wobble position (U34) of tRNA, leading to the formation of s(2)U34.</text>
</comment>
<comment type="catalytic activity">
    <reaction evidence="1">
        <text>S-sulfanyl-L-cysteinyl-[protein] + uridine(34) in tRNA + AH2 + ATP = 2-thiouridine(34) in tRNA + L-cysteinyl-[protein] + A + AMP + diphosphate + H(+)</text>
        <dbReference type="Rhea" id="RHEA:47032"/>
        <dbReference type="Rhea" id="RHEA-COMP:10131"/>
        <dbReference type="Rhea" id="RHEA-COMP:11726"/>
        <dbReference type="Rhea" id="RHEA-COMP:11727"/>
        <dbReference type="Rhea" id="RHEA-COMP:11728"/>
        <dbReference type="ChEBI" id="CHEBI:13193"/>
        <dbReference type="ChEBI" id="CHEBI:15378"/>
        <dbReference type="ChEBI" id="CHEBI:17499"/>
        <dbReference type="ChEBI" id="CHEBI:29950"/>
        <dbReference type="ChEBI" id="CHEBI:30616"/>
        <dbReference type="ChEBI" id="CHEBI:33019"/>
        <dbReference type="ChEBI" id="CHEBI:61963"/>
        <dbReference type="ChEBI" id="CHEBI:65315"/>
        <dbReference type="ChEBI" id="CHEBI:87170"/>
        <dbReference type="ChEBI" id="CHEBI:456215"/>
        <dbReference type="EC" id="2.8.1.13"/>
    </reaction>
</comment>
<comment type="subcellular location">
    <subcellularLocation>
        <location evidence="1">Cytoplasm</location>
    </subcellularLocation>
</comment>
<comment type="similarity">
    <text evidence="1">Belongs to the MnmA/TRMU family.</text>
</comment>